<feature type="signal peptide" evidence="1">
    <location>
        <begin position="1"/>
        <end position="37"/>
    </location>
</feature>
<feature type="chain" id="PRO_0000456636" description="Chaperone for lacto-N-biosidase">
    <location>
        <begin position="38"/>
        <end position="280"/>
    </location>
</feature>
<accession>P0DW94</accession>
<keyword id="KW-0964">Secreted</keyword>
<keyword id="KW-0732">Signal</keyword>
<comment type="function">
    <text evidence="2">Chaperone required for active expression of the lacto-N-biosidase LnbX.</text>
</comment>
<comment type="subunit">
    <text evidence="2">Homodimer.</text>
</comment>
<comment type="subcellular location">
    <subcellularLocation>
        <location evidence="4">Secreted</location>
    </subcellularLocation>
</comment>
<evidence type="ECO:0000255" key="1"/>
<evidence type="ECO:0000269" key="2">
    <source>
    </source>
</evidence>
<evidence type="ECO:0000303" key="3">
    <source>
    </source>
</evidence>
<evidence type="ECO:0000305" key="4">
    <source>
    </source>
</evidence>
<evidence type="ECO:0000312" key="5">
    <source>
        <dbReference type="EMBL" id="BAJ67173.1"/>
    </source>
</evidence>
<evidence type="ECO:0000312" key="6">
    <source>
        <dbReference type="EMBL" id="BK008766"/>
    </source>
</evidence>
<organism>
    <name type="scientific">Bifidobacterium longum subsp. longum (strain ATCC 15707 / DSM 20219 / JCM 1217 / NCTC 11818 / E194b)</name>
    <dbReference type="NCBI Taxonomy" id="565042"/>
    <lineage>
        <taxon>Bacteria</taxon>
        <taxon>Bacillati</taxon>
        <taxon>Actinomycetota</taxon>
        <taxon>Actinomycetes</taxon>
        <taxon>Bifidobacteriales</taxon>
        <taxon>Bifidobacteriaceae</taxon>
        <taxon>Bifidobacterium</taxon>
    </lineage>
</organism>
<proteinExistence type="evidence at protein level"/>
<dbReference type="EMBL" id="BK008766">
    <property type="status" value="NOT_ANNOTATED_CDS"/>
    <property type="molecule type" value="Genomic_DNA"/>
</dbReference>
<dbReference type="EMBL" id="AP010888">
    <property type="protein sequence ID" value="BAJ67173.1"/>
    <property type="molecule type" value="Genomic_DNA"/>
</dbReference>
<dbReference type="RefSeq" id="WP_013582889.1">
    <property type="nucleotide sequence ID" value="NC_015067.1"/>
</dbReference>
<dbReference type="SMR" id="P0DW94"/>
<dbReference type="GeneID" id="69578723"/>
<dbReference type="KEGG" id="blm:BLLJ_1506"/>
<dbReference type="GO" id="GO:0005576">
    <property type="term" value="C:extracellular region"/>
    <property type="evidence" value="ECO:0007669"/>
    <property type="project" value="UniProtKB-SubCell"/>
</dbReference>
<reference key="1">
    <citation type="journal article" date="2013" name="J. Biol. Chem.">
        <title>Lacto-N-biosidase encoded by a novel gene of Bifidobacterium longum subspecies longum shows unique substrate specificity and requires a designated chaperone for its active expression.</title>
        <authorList>
            <person name="Sakurama H."/>
            <person name="Kiyohara M."/>
            <person name="Wada J."/>
            <person name="Honda Y."/>
            <person name="Yamaguchi M."/>
            <person name="Fukiya S."/>
            <person name="Yokota A."/>
            <person name="Ashida H."/>
            <person name="Kumagai H."/>
            <person name="Kitaoka M."/>
            <person name="Yamamoto K."/>
            <person name="Katayama T."/>
        </authorList>
    </citation>
    <scope>NUCLEOTIDE SEQUENCE [GENOMIC DNA]</scope>
    <scope>FUNCTION</scope>
    <scope>SUBUNIT</scope>
    <scope>SUBCELLULAR LOCATION</scope>
    <source>
        <strain>ATCC 15707 / DSM 20219 / CCUG 28903 / JCM 1217 / NCIMB 702259 / NCTC 11818 / E194b</strain>
    </source>
</reference>
<reference key="2">
    <citation type="journal article" date="2011" name="Nature">
        <title>Bifidobacteria can protect from enteropathogenic infection through production of acetate.</title>
        <authorList>
            <person name="Fukuda S."/>
            <person name="Toh H."/>
            <person name="Hase K."/>
            <person name="Oshima K."/>
            <person name="Nakanishi Y."/>
            <person name="Yoshimura K."/>
            <person name="Tobe T."/>
            <person name="Clarke J.M."/>
            <person name="Topping D.L."/>
            <person name="Suzuki T."/>
            <person name="Taylor T.D."/>
            <person name="Itoh K."/>
            <person name="Kikuchi J."/>
            <person name="Morita H."/>
            <person name="Hattori M."/>
            <person name="Ohno H."/>
        </authorList>
    </citation>
    <scope>NUCLEOTIDE SEQUENCE [LARGE SCALE GENOMIC DNA]</scope>
    <source>
        <strain>ATCC 15707 / DSM 20219 / CCUG 28903 / JCM 1217 / NCIMB 702259 / NCTC 11818 / E194b</strain>
    </source>
</reference>
<sequence length="280" mass="30217">MPRRHRFAAAIAAVAVAAVLLVTLTVAVVTHGDGAFAPAGTPAGAGASAGIGSDTGSNASEDSDMFPTIVFGDTVIERKEYVAALKAQHGAARLYFRQTYGVDPAEDGWDKAHDGEVPCRWLASRAIDELRRRHAAYLIGVDLGQVADDSYASIVARMEAVNSGNAELKSDGGIVYGRTGFDIDSYLSYELSALKNAYTGDESNPGMSLSDDEVRRYYDEHDWTKDGVDGKTPLDEVRGNVKAQMRSERYDELVSQRAEAIDVTDLPWDALYRFTAGRLG</sequence>
<gene>
    <name evidence="3 6" type="primary">lnbY</name>
    <name evidence="5" type="ordered locus">BLLJ_1506</name>
</gene>
<name>LNBY_BIFL2</name>
<protein>
    <recommendedName>
        <fullName>Chaperone for lacto-N-biosidase</fullName>
    </recommendedName>
</protein>